<evidence type="ECO:0000250" key="1"/>
<evidence type="ECO:0000250" key="2">
    <source>
        <dbReference type="UniProtKB" id="P50749"/>
    </source>
</evidence>
<evidence type="ECO:0000255" key="3">
    <source>
        <dbReference type="PROSITE-ProRule" id="PRU00166"/>
    </source>
</evidence>
<evidence type="ECO:0000255" key="4">
    <source>
        <dbReference type="PROSITE-ProRule" id="PRU00310"/>
    </source>
</evidence>
<keyword id="KW-0131">Cell cycle</keyword>
<keyword id="KW-0137">Centromere</keyword>
<keyword id="KW-0158">Chromosome</keyword>
<keyword id="KW-0963">Cytoplasm</keyword>
<keyword id="KW-0995">Kinetochore</keyword>
<keyword id="KW-0539">Nucleus</keyword>
<keyword id="KW-0597">Phosphoprotein</keyword>
<keyword id="KW-1185">Reference proteome</keyword>
<keyword id="KW-0043">Tumor suppressor</keyword>
<reference key="1">
    <citation type="journal article" date="2004" name="Genome Res.">
        <title>The status, quality, and expansion of the NIH full-length cDNA project: the Mammalian Gene Collection (MGC).</title>
        <authorList>
            <consortium name="The MGC Project Team"/>
        </authorList>
    </citation>
    <scope>NUCLEOTIDE SEQUENCE [LARGE SCALE MRNA]</scope>
    <source>
        <tissue>Prostate</tissue>
    </source>
</reference>
<proteinExistence type="evidence at transcript level"/>
<gene>
    <name type="primary">Rassf2</name>
</gene>
<feature type="chain" id="PRO_0000233039" description="Ras association domain-containing protein 2">
    <location>
        <begin position="1"/>
        <end position="326"/>
    </location>
</feature>
<feature type="domain" description="Ras-associating" evidence="3">
    <location>
        <begin position="176"/>
        <end position="264"/>
    </location>
</feature>
<feature type="domain" description="SARAH" evidence="4">
    <location>
        <begin position="272"/>
        <end position="319"/>
    </location>
</feature>
<accession>Q3B7D5</accession>
<protein>
    <recommendedName>
        <fullName>Ras association domain-containing protein 2</fullName>
    </recommendedName>
</protein>
<comment type="function">
    <text evidence="1">Potential tumor suppressor. Acts as a KRAS-specific effector protein. May promote apoptosis and cell cycle arrest. Stabilizes STK3/MST2 by protecting it from proteasomal degradation (By similarity).</text>
</comment>
<comment type="subunit">
    <text evidence="1">Interacts directly with activated KRAS in a GTP-dependent manner. Interacts (via SARAH domain) with STK3/MST2 and STK4/MST1.</text>
</comment>
<comment type="subcellular location">
    <subcellularLocation>
        <location evidence="2">Nucleus</location>
    </subcellularLocation>
    <subcellularLocation>
        <location evidence="2">Cytoplasm</location>
    </subcellularLocation>
    <subcellularLocation>
        <location evidence="2">Chromosome</location>
        <location evidence="2">Centromere</location>
        <location evidence="2">Kinetochore</location>
    </subcellularLocation>
    <text evidence="2">Translocates to the cytoplasm in the presence of STK3/MST2 and STK4/MST1.</text>
</comment>
<comment type="PTM">
    <text evidence="1">Phosphorylated by STK3/MST2 and STK4/MST1.</text>
</comment>
<name>RASF2_RAT</name>
<sequence length="326" mass="38021">MDYTHQTALIPCGQDKYMPKSELLLHLKTYNLYYEGQNLQLRHREEEDEFIVEGLLNISWGLRRPIRLQMQDDHERIRPPPSSSSWHSGCNLGAQGTTLKPLTVPTVQISEVDMPVENMEMHSPTDSRGLKPVQEDTPQLMRTRSDVGVRRRGNVRTSSDQRRIRRHRFSINGHFYNHKTSVFTPAYGSVTNVRINSTMTTPQVLKLLLNKFKIENSAEEFALYVVHTSGEKQKLKNSDYPLIARILQGPCEQISKVFLMEKDQVEEVTYDVAQYIKFEMPVLKSFIQKLQEEEDREVEKLMQKYTVLRLMIRQRLEEIAETPETI</sequence>
<organism>
    <name type="scientific">Rattus norvegicus</name>
    <name type="common">Rat</name>
    <dbReference type="NCBI Taxonomy" id="10116"/>
    <lineage>
        <taxon>Eukaryota</taxon>
        <taxon>Metazoa</taxon>
        <taxon>Chordata</taxon>
        <taxon>Craniata</taxon>
        <taxon>Vertebrata</taxon>
        <taxon>Euteleostomi</taxon>
        <taxon>Mammalia</taxon>
        <taxon>Eutheria</taxon>
        <taxon>Euarchontoglires</taxon>
        <taxon>Glires</taxon>
        <taxon>Rodentia</taxon>
        <taxon>Myomorpha</taxon>
        <taxon>Muroidea</taxon>
        <taxon>Muridae</taxon>
        <taxon>Murinae</taxon>
        <taxon>Rattus</taxon>
    </lineage>
</organism>
<dbReference type="EMBL" id="BC107656">
    <property type="protein sequence ID" value="AAI07657.1"/>
    <property type="molecule type" value="mRNA"/>
</dbReference>
<dbReference type="RefSeq" id="NP_001032173.1">
    <property type="nucleotide sequence ID" value="NM_001037096.1"/>
</dbReference>
<dbReference type="SMR" id="Q3B7D5"/>
<dbReference type="FunCoup" id="Q3B7D5">
    <property type="interactions" value="2483"/>
</dbReference>
<dbReference type="STRING" id="10116.ENSRNOP00000028883"/>
<dbReference type="PhosphoSitePlus" id="Q3B7D5"/>
<dbReference type="PaxDb" id="10116-ENSRNOP00000028883"/>
<dbReference type="GeneID" id="311437"/>
<dbReference type="KEGG" id="rno:311437"/>
<dbReference type="UCSC" id="RGD:1305551">
    <property type="organism name" value="rat"/>
</dbReference>
<dbReference type="AGR" id="RGD:1305551"/>
<dbReference type="CTD" id="9770"/>
<dbReference type="RGD" id="1305551">
    <property type="gene designation" value="Rassf2"/>
</dbReference>
<dbReference type="eggNOG" id="KOG4239">
    <property type="taxonomic scope" value="Eukaryota"/>
</dbReference>
<dbReference type="InParanoid" id="Q3B7D5"/>
<dbReference type="PhylomeDB" id="Q3B7D5"/>
<dbReference type="PRO" id="PR:Q3B7D5"/>
<dbReference type="Proteomes" id="UP000002494">
    <property type="component" value="Unplaced"/>
</dbReference>
<dbReference type="GO" id="GO:0005737">
    <property type="term" value="C:cytoplasm"/>
    <property type="evidence" value="ECO:0000266"/>
    <property type="project" value="RGD"/>
</dbReference>
<dbReference type="GO" id="GO:0000776">
    <property type="term" value="C:kinetochore"/>
    <property type="evidence" value="ECO:0000250"/>
    <property type="project" value="UniProtKB"/>
</dbReference>
<dbReference type="GO" id="GO:0005634">
    <property type="term" value="C:nucleus"/>
    <property type="evidence" value="ECO:0000266"/>
    <property type="project" value="RGD"/>
</dbReference>
<dbReference type="GO" id="GO:0032991">
    <property type="term" value="C:protein-containing complex"/>
    <property type="evidence" value="ECO:0000266"/>
    <property type="project" value="RGD"/>
</dbReference>
<dbReference type="GO" id="GO:0004672">
    <property type="term" value="F:protein kinase activity"/>
    <property type="evidence" value="ECO:0000266"/>
    <property type="project" value="RGD"/>
</dbReference>
<dbReference type="GO" id="GO:0046849">
    <property type="term" value="P:bone remodeling"/>
    <property type="evidence" value="ECO:0000266"/>
    <property type="project" value="RGD"/>
</dbReference>
<dbReference type="GO" id="GO:0007249">
    <property type="term" value="P:canonical NF-kappaB signal transduction"/>
    <property type="evidence" value="ECO:0000266"/>
    <property type="project" value="RGD"/>
</dbReference>
<dbReference type="GO" id="GO:0048872">
    <property type="term" value="P:homeostasis of number of cells"/>
    <property type="evidence" value="ECO:0000266"/>
    <property type="project" value="RGD"/>
</dbReference>
<dbReference type="GO" id="GO:1901223">
    <property type="term" value="P:negative regulation of non-canonical NF-kappaB signal transduction"/>
    <property type="evidence" value="ECO:0000266"/>
    <property type="project" value="RGD"/>
</dbReference>
<dbReference type="GO" id="GO:0001503">
    <property type="term" value="P:ossification"/>
    <property type="evidence" value="ECO:0000266"/>
    <property type="project" value="RGD"/>
</dbReference>
<dbReference type="GO" id="GO:0043065">
    <property type="term" value="P:positive regulation of apoptotic process"/>
    <property type="evidence" value="ECO:0000266"/>
    <property type="project" value="RGD"/>
</dbReference>
<dbReference type="GO" id="GO:0046330">
    <property type="term" value="P:positive regulation of JNK cascade"/>
    <property type="evidence" value="ECO:0000266"/>
    <property type="project" value="RGD"/>
</dbReference>
<dbReference type="GO" id="GO:0050821">
    <property type="term" value="P:protein stabilization"/>
    <property type="evidence" value="ECO:0000266"/>
    <property type="project" value="RGD"/>
</dbReference>
<dbReference type="GO" id="GO:1901222">
    <property type="term" value="P:regulation of non-canonical NF-kappaB signal transduction"/>
    <property type="evidence" value="ECO:0000266"/>
    <property type="project" value="RGD"/>
</dbReference>
<dbReference type="GO" id="GO:0045667">
    <property type="term" value="P:regulation of osteoblast differentiation"/>
    <property type="evidence" value="ECO:0000266"/>
    <property type="project" value="RGD"/>
</dbReference>
<dbReference type="GO" id="GO:0045670">
    <property type="term" value="P:regulation of osteoclast differentiation"/>
    <property type="evidence" value="ECO:0000266"/>
    <property type="project" value="RGD"/>
</dbReference>
<dbReference type="GO" id="GO:0007165">
    <property type="term" value="P:signal transduction"/>
    <property type="evidence" value="ECO:0000318"/>
    <property type="project" value="GO_Central"/>
</dbReference>
<dbReference type="GO" id="GO:0001501">
    <property type="term" value="P:skeletal system development"/>
    <property type="evidence" value="ECO:0000266"/>
    <property type="project" value="RGD"/>
</dbReference>
<dbReference type="CDD" id="cd17221">
    <property type="entry name" value="RA_RASSF2"/>
    <property type="match status" value="1"/>
</dbReference>
<dbReference type="Gene3D" id="3.10.20.90">
    <property type="entry name" value="Phosphatidylinositol 3-kinase Catalytic Subunit, Chain A, domain 1"/>
    <property type="match status" value="1"/>
</dbReference>
<dbReference type="InterPro" id="IPR000159">
    <property type="entry name" value="RA_dom"/>
</dbReference>
<dbReference type="InterPro" id="IPR033614">
    <property type="entry name" value="RASSF1-6"/>
</dbReference>
<dbReference type="InterPro" id="IPR033618">
    <property type="entry name" value="RASSF2_RA"/>
</dbReference>
<dbReference type="InterPro" id="IPR011524">
    <property type="entry name" value="SARAH_dom"/>
</dbReference>
<dbReference type="InterPro" id="IPR029071">
    <property type="entry name" value="Ubiquitin-like_domsf"/>
</dbReference>
<dbReference type="PANTHER" id="PTHR22738:SF14">
    <property type="entry name" value="RAS ASSOCIATION DOMAIN-CONTAINING PROTEIN 2"/>
    <property type="match status" value="1"/>
</dbReference>
<dbReference type="PANTHER" id="PTHR22738">
    <property type="entry name" value="RASSF"/>
    <property type="match status" value="1"/>
</dbReference>
<dbReference type="Pfam" id="PF16517">
    <property type="entry name" value="Nore1-SARAH"/>
    <property type="match status" value="1"/>
</dbReference>
<dbReference type="Pfam" id="PF00788">
    <property type="entry name" value="RA"/>
    <property type="match status" value="1"/>
</dbReference>
<dbReference type="SMART" id="SM00314">
    <property type="entry name" value="RA"/>
    <property type="match status" value="1"/>
</dbReference>
<dbReference type="SUPFAM" id="SSF54236">
    <property type="entry name" value="Ubiquitin-like"/>
    <property type="match status" value="1"/>
</dbReference>
<dbReference type="PROSITE" id="PS50200">
    <property type="entry name" value="RA"/>
    <property type="match status" value="1"/>
</dbReference>
<dbReference type="PROSITE" id="PS50951">
    <property type="entry name" value="SARAH"/>
    <property type="match status" value="1"/>
</dbReference>